<sequence>MASRILGSIKEEVTCPICLELLTEPLSLDCGHSFCQACITANHKESMLHQGERSCPLCRLPYQSENLRPNRHLASIVERLREVMLRPEERQNVDHCARHGEKLLLFCEQDGNIICWLCERSQEHRGHNTFLVEEVAQKYREKLQVALETMRQKQQDAEKLEADVRQEQASWKIQIQNDKTNIMAEFKQLRDILDCEESNELQNLEKEEKNILKRLVQSENDMVLQTQSVRVLISDLERRLQGSVVELLQDVDGVIKRIEKVTLQKPKTFLNEKRRVFRAPDLKRMLQVLKELTEVQRYWAHVTLVPSHPSYTIISEDGRQVRYQKPIRHLLVKVQYFYGVLGSPSITSGKHYWEVDVSNKRAWTLGVCVSLKCTANQSVSGTENYQPKNGYWVIGLRNAGNYRAFQSSFEFRDFLAGSRLTLSPPLIVPLFMTICPNRVGVFLDYEARTISFFNVTSNGFLIYKFSDCHFSYPVFPYFNPMTCELPMTLCSPRS</sequence>
<protein>
    <recommendedName>
        <fullName>Tripartite motif-containing protein 5</fullName>
        <ecNumber>2.3.2.27</ecNumber>
    </recommendedName>
    <alternativeName>
        <fullName evidence="9">RING-type E3 ubiquitin transferase TRIM5</fullName>
    </alternativeName>
    <alternativeName>
        <fullName>TRIM5alpha</fullName>
    </alternativeName>
</protein>
<organism>
    <name type="scientific">Saimiri sciureus</name>
    <name type="common">Common squirrel monkey</name>
    <dbReference type="NCBI Taxonomy" id="9521"/>
    <lineage>
        <taxon>Eukaryota</taxon>
        <taxon>Metazoa</taxon>
        <taxon>Chordata</taxon>
        <taxon>Craniata</taxon>
        <taxon>Vertebrata</taxon>
        <taxon>Euteleostomi</taxon>
        <taxon>Mammalia</taxon>
        <taxon>Eutheria</taxon>
        <taxon>Euarchontoglires</taxon>
        <taxon>Primates</taxon>
        <taxon>Haplorrhini</taxon>
        <taxon>Platyrrhini</taxon>
        <taxon>Cebidae</taxon>
        <taxon>Saimiriinae</taxon>
        <taxon>Saimiri</taxon>
    </lineage>
</organism>
<keyword id="KW-0007">Acetylation</keyword>
<keyword id="KW-0051">Antiviral defense</keyword>
<keyword id="KW-0072">Autophagy</keyword>
<keyword id="KW-0175">Coiled coil</keyword>
<keyword id="KW-0963">Cytoplasm</keyword>
<keyword id="KW-0391">Immunity</keyword>
<keyword id="KW-0399">Innate immunity</keyword>
<keyword id="KW-0479">Metal-binding</keyword>
<keyword id="KW-0539">Nucleus</keyword>
<keyword id="KW-0808">Transferase</keyword>
<keyword id="KW-0832">Ubl conjugation</keyword>
<keyword id="KW-0833">Ubl conjugation pathway</keyword>
<keyword id="KW-0862">Zinc</keyword>
<keyword id="KW-0863">Zinc-finger</keyword>
<evidence type="ECO:0000250" key="1"/>
<evidence type="ECO:0000250" key="2">
    <source>
        <dbReference type="UniProtKB" id="Q0PF16"/>
    </source>
</evidence>
<evidence type="ECO:0000250" key="3">
    <source>
        <dbReference type="UniProtKB" id="Q9C035"/>
    </source>
</evidence>
<evidence type="ECO:0000255" key="4"/>
<evidence type="ECO:0000255" key="5">
    <source>
        <dbReference type="PROSITE-ProRule" id="PRU00024"/>
    </source>
</evidence>
<evidence type="ECO:0000255" key="6">
    <source>
        <dbReference type="PROSITE-ProRule" id="PRU00175"/>
    </source>
</evidence>
<evidence type="ECO:0000255" key="7">
    <source>
        <dbReference type="PROSITE-ProRule" id="PRU00548"/>
    </source>
</evidence>
<evidence type="ECO:0000269" key="8">
    <source>
    </source>
</evidence>
<evidence type="ECO:0000305" key="9"/>
<dbReference type="EC" id="2.3.2.27"/>
<dbReference type="EMBL" id="AY843517">
    <property type="protein sequence ID" value="AAV91988.1"/>
    <property type="molecule type" value="Genomic_DNA"/>
</dbReference>
<dbReference type="SMR" id="Q5D7I0"/>
<dbReference type="UniPathway" id="UPA00143"/>
<dbReference type="GO" id="GO:0005634">
    <property type="term" value="C:nucleus"/>
    <property type="evidence" value="ECO:0007669"/>
    <property type="project" value="UniProtKB-SubCell"/>
</dbReference>
<dbReference type="GO" id="GO:0000932">
    <property type="term" value="C:P-body"/>
    <property type="evidence" value="ECO:0000250"/>
    <property type="project" value="UniProtKB"/>
</dbReference>
<dbReference type="GO" id="GO:0038187">
    <property type="term" value="F:pattern recognition receptor activity"/>
    <property type="evidence" value="ECO:0000250"/>
    <property type="project" value="UniProtKB"/>
</dbReference>
<dbReference type="GO" id="GO:0004842">
    <property type="term" value="F:ubiquitin-protein transferase activity"/>
    <property type="evidence" value="ECO:0000250"/>
    <property type="project" value="UniProtKB"/>
</dbReference>
<dbReference type="GO" id="GO:0008270">
    <property type="term" value="F:zinc ion binding"/>
    <property type="evidence" value="ECO:0007669"/>
    <property type="project" value="UniProtKB-KW"/>
</dbReference>
<dbReference type="GO" id="GO:0002218">
    <property type="term" value="P:activation of innate immune response"/>
    <property type="evidence" value="ECO:0000250"/>
    <property type="project" value="UniProtKB"/>
</dbReference>
<dbReference type="GO" id="GO:0006914">
    <property type="term" value="P:autophagy"/>
    <property type="evidence" value="ECO:0007669"/>
    <property type="project" value="UniProtKB-KW"/>
</dbReference>
<dbReference type="GO" id="GO:0051607">
    <property type="term" value="P:defense response to virus"/>
    <property type="evidence" value="ECO:0000304"/>
    <property type="project" value="UniProtKB"/>
</dbReference>
<dbReference type="GO" id="GO:0045087">
    <property type="term" value="P:innate immune response"/>
    <property type="evidence" value="ECO:0007669"/>
    <property type="project" value="UniProtKB-KW"/>
</dbReference>
<dbReference type="GO" id="GO:0043123">
    <property type="term" value="P:positive regulation of canonical NF-kappaB signal transduction"/>
    <property type="evidence" value="ECO:0000250"/>
    <property type="project" value="UniProtKB"/>
</dbReference>
<dbReference type="GO" id="GO:0043410">
    <property type="term" value="P:positive regulation of MAPK cascade"/>
    <property type="evidence" value="ECO:0000250"/>
    <property type="project" value="UniProtKB"/>
</dbReference>
<dbReference type="GO" id="GO:0051092">
    <property type="term" value="P:positive regulation of NF-kappaB transcription factor activity"/>
    <property type="evidence" value="ECO:0000250"/>
    <property type="project" value="UniProtKB"/>
</dbReference>
<dbReference type="GO" id="GO:0070534">
    <property type="term" value="P:protein K63-linked ubiquitination"/>
    <property type="evidence" value="ECO:0000250"/>
    <property type="project" value="UniProtKB"/>
</dbReference>
<dbReference type="GO" id="GO:0031664">
    <property type="term" value="P:regulation of lipopolysaccharide-mediated signaling pathway"/>
    <property type="evidence" value="ECO:0000250"/>
    <property type="project" value="UniProtKB"/>
</dbReference>
<dbReference type="CDD" id="cd19761">
    <property type="entry name" value="Bbox2_TRIM5-like"/>
    <property type="match status" value="1"/>
</dbReference>
<dbReference type="CDD" id="cd16591">
    <property type="entry name" value="RING-HC_TRIM5-like_C-IV"/>
    <property type="match status" value="1"/>
</dbReference>
<dbReference type="CDD" id="cd15822">
    <property type="entry name" value="SPRY_PRY_TRIM5"/>
    <property type="match status" value="1"/>
</dbReference>
<dbReference type="FunFam" id="2.60.120.920:FF:000023">
    <property type="entry name" value="Tripartite motif-containing 5 (Predicted)"/>
    <property type="match status" value="1"/>
</dbReference>
<dbReference type="FunFam" id="3.30.160.60:FF:000386">
    <property type="entry name" value="Tripartite motif-containing 5 (Predicted)"/>
    <property type="match status" value="1"/>
</dbReference>
<dbReference type="FunFam" id="3.30.40.10:FF:000144">
    <property type="entry name" value="Tripartite motif-containing 5 (Predicted)"/>
    <property type="match status" value="1"/>
</dbReference>
<dbReference type="Gene3D" id="2.60.120.920">
    <property type="match status" value="1"/>
</dbReference>
<dbReference type="Gene3D" id="3.30.160.60">
    <property type="entry name" value="Classic Zinc Finger"/>
    <property type="match status" value="1"/>
</dbReference>
<dbReference type="Gene3D" id="3.30.40.10">
    <property type="entry name" value="Zinc/RING finger domain, C3HC4 (zinc finger)"/>
    <property type="match status" value="1"/>
</dbReference>
<dbReference type="InterPro" id="IPR001870">
    <property type="entry name" value="B30.2/SPRY"/>
</dbReference>
<dbReference type="InterPro" id="IPR043136">
    <property type="entry name" value="B30.2/SPRY_sf"/>
</dbReference>
<dbReference type="InterPro" id="IPR003879">
    <property type="entry name" value="Butyrophylin_SPRY"/>
</dbReference>
<dbReference type="InterPro" id="IPR013320">
    <property type="entry name" value="ConA-like_dom_sf"/>
</dbReference>
<dbReference type="InterPro" id="IPR003877">
    <property type="entry name" value="SPRY_dom"/>
</dbReference>
<dbReference type="InterPro" id="IPR050143">
    <property type="entry name" value="TRIM/RBCC"/>
</dbReference>
<dbReference type="InterPro" id="IPR027370">
    <property type="entry name" value="Znf-RING_euk"/>
</dbReference>
<dbReference type="InterPro" id="IPR000315">
    <property type="entry name" value="Znf_B-box"/>
</dbReference>
<dbReference type="InterPro" id="IPR001841">
    <property type="entry name" value="Znf_RING"/>
</dbReference>
<dbReference type="InterPro" id="IPR013083">
    <property type="entry name" value="Znf_RING/FYVE/PHD"/>
</dbReference>
<dbReference type="InterPro" id="IPR017907">
    <property type="entry name" value="Znf_RING_CS"/>
</dbReference>
<dbReference type="PANTHER" id="PTHR24103">
    <property type="entry name" value="E3 UBIQUITIN-PROTEIN LIGASE TRIM"/>
    <property type="match status" value="1"/>
</dbReference>
<dbReference type="Pfam" id="PF00622">
    <property type="entry name" value="SPRY"/>
    <property type="match status" value="1"/>
</dbReference>
<dbReference type="Pfam" id="PF00643">
    <property type="entry name" value="zf-B_box"/>
    <property type="match status" value="1"/>
</dbReference>
<dbReference type="Pfam" id="PF13445">
    <property type="entry name" value="zf-RING_UBOX"/>
    <property type="match status" value="1"/>
</dbReference>
<dbReference type="PRINTS" id="PR01407">
    <property type="entry name" value="BUTYPHLNCDUF"/>
</dbReference>
<dbReference type="SMART" id="SM00336">
    <property type="entry name" value="BBOX"/>
    <property type="match status" value="1"/>
</dbReference>
<dbReference type="SMART" id="SM00184">
    <property type="entry name" value="RING"/>
    <property type="match status" value="1"/>
</dbReference>
<dbReference type="SMART" id="SM00449">
    <property type="entry name" value="SPRY"/>
    <property type="match status" value="1"/>
</dbReference>
<dbReference type="SUPFAM" id="SSF57845">
    <property type="entry name" value="B-box zinc-binding domain"/>
    <property type="match status" value="1"/>
</dbReference>
<dbReference type="SUPFAM" id="SSF49899">
    <property type="entry name" value="Concanavalin A-like lectins/glucanases"/>
    <property type="match status" value="1"/>
</dbReference>
<dbReference type="SUPFAM" id="SSF57850">
    <property type="entry name" value="RING/U-box"/>
    <property type="match status" value="1"/>
</dbReference>
<dbReference type="PROSITE" id="PS50188">
    <property type="entry name" value="B302_SPRY"/>
    <property type="match status" value="1"/>
</dbReference>
<dbReference type="PROSITE" id="PS50119">
    <property type="entry name" value="ZF_BBOX"/>
    <property type="match status" value="1"/>
</dbReference>
<dbReference type="PROSITE" id="PS00518">
    <property type="entry name" value="ZF_RING_1"/>
    <property type="match status" value="1"/>
</dbReference>
<dbReference type="PROSITE" id="PS50089">
    <property type="entry name" value="ZF_RING_2"/>
    <property type="match status" value="1"/>
</dbReference>
<comment type="function">
    <text evidence="3 8">Capsid-specific restriction factor that prevents infection from non-host-adapted retroviruses. Blocks viral replication early in the life cycle, after viral entry but before reverse transcription. In addition to acting as a capsid-specific restriction factor, also acts as a pattern recognition receptor that activates innate immune signaling in response to the retroviral capsid lattice. Binding to the viral capsid triggers its E3 ubiquitin ligase activity, and in concert with the heterodimeric ubiquitin conjugating enzyme complex UBE2V1-UBE2N (also known as UBC13-UEV1A complex) generates 'Lys-63'-linked polyubiquitin chains, which in turn are catalysts in the autophosphorylation of the MAP3K7/TAK1 complex (includes TAK1, TAB2, and TAB3). Activation of the MAP3K7/TAK1 complex by autophosphorylation results in the induction and expression of NF-kappa-B and MAPK-responsive inflammatory genes, thereby leading to an innate immune response in the infected cell. Restricts infection by simian immunodeficiency virus (SIV-mac) (PubMed:22291694). Plays a role in regulating autophagy through activation of autophagy regulator BECN1 by causing its dissociation from its inhibitors BCL2 and TAB2 (By similarity).</text>
</comment>
<comment type="catalytic activity">
    <reaction>
        <text>S-ubiquitinyl-[E2 ubiquitin-conjugating enzyme]-L-cysteine + [acceptor protein]-L-lysine = [E2 ubiquitin-conjugating enzyme]-L-cysteine + N(6)-ubiquitinyl-[acceptor protein]-L-lysine.</text>
        <dbReference type="EC" id="2.3.2.27"/>
    </reaction>
</comment>
<comment type="pathway">
    <text>Protein modification; protein ubiquitination.</text>
</comment>
<comment type="subunit">
    <text evidence="2 3">Can form homodimers and homotrimers. In addition to lower-order dimerization, also exhibits a higher-order multimerization and both low- and high-order multimerizations are essential for its restriction activity. Interacts with BTBD1 and BTBD2. Interacts with PSMC4, PSMC5, PSMD7 and HSPA8/HSC70. Interacts (via B30.2/SPRY domain) with HSPA1A/B. Interacts with PSMC2, MAP3K7/TAK1, TAB2 and TAB3. Interacts with SQSTM1. Interacts with TRIM6 and TRIM34. Interacts with ULK1 (phosphorylated form), GABARAP, GABARAPL1, GABARAPL2, MAP1LC3A, MAP1LC3C and BECN1.</text>
</comment>
<comment type="subcellular location">
    <subcellularLocation>
        <location evidence="2">Cytoplasm</location>
    </subcellularLocation>
    <subcellularLocation>
        <location evidence="2">Nucleus</location>
    </subcellularLocation>
    <text evidence="2">Predominantly localizes in cytoplasmic bodies. Localization may be influenced by the coexpression of other TRIM proteins, hence partial nuclear localization is observed in the presence of TRIM22 or TRIM27. In cytoplasmic bodies, colocalizes with proteasomal subunits and SQSTM1.</text>
</comment>
<comment type="domain">
    <text evidence="2 3">The B box-type zinc finger domain and the coiled-coil domain contribute to the higher and low order multimerization respectively which is essential for restriction activity. The coiled coil domain is important for higher order multimerization by promoting the initial dimerization.</text>
</comment>
<comment type="domain">
    <text evidence="1">The B30.2/SPRY domain acts as a capsid recognition domain. Polymorphisms in this domain explain the observed species-specific differences among orthologs (By similarity).</text>
</comment>
<comment type="domain">
    <text evidence="1">The RING-type zinc finger domain confers E3 ubiquitin ligase activity and is essential for retrovirus restriction activity, autoubiquitination and higher-order multimerization.</text>
</comment>
<comment type="PTM">
    <text evidence="1">Degraded in a proteasome-independent fashion in the absence of viral infection but in a proteasome-dependent fashion following exposure to restriction sensitive virus.</text>
</comment>
<comment type="PTM">
    <text evidence="1">Autoubiquitinated in a RING finger- and UBE2D2-dependent manner. Monoubiquitinated by TRIM21. Deubiquitinated by Yersinia YopJ. Ubiquitination may not lead to proteasomal degradation (By similarity).</text>
</comment>
<comment type="similarity">
    <text evidence="9">Belongs to the TRIM/RBCC family.</text>
</comment>
<gene>
    <name type="primary">TRIM5</name>
</gene>
<feature type="initiator methionine" description="Removed" evidence="3">
    <location>
        <position position="1"/>
    </location>
</feature>
<feature type="chain" id="PRO_0000273477" description="Tripartite motif-containing protein 5">
    <location>
        <begin position="2"/>
        <end position="494"/>
    </location>
</feature>
<feature type="domain" description="B30.2/SPRY" evidence="7">
    <location>
        <begin position="280"/>
        <end position="494"/>
    </location>
</feature>
<feature type="zinc finger region" description="RING-type" evidence="6">
    <location>
        <begin position="15"/>
        <end position="59"/>
    </location>
</feature>
<feature type="zinc finger region" description="B box-type" evidence="5">
    <location>
        <begin position="91"/>
        <end position="132"/>
    </location>
</feature>
<feature type="region of interest" description="Required for interaction with GABARAP and for autophagy" evidence="2">
    <location>
        <begin position="186"/>
        <end position="199"/>
    </location>
</feature>
<feature type="coiled-coil region" evidence="4">
    <location>
        <begin position="132"/>
        <end position="223"/>
    </location>
</feature>
<feature type="binding site" evidence="5">
    <location>
        <position position="96"/>
    </location>
    <ligand>
        <name>Zn(2+)</name>
        <dbReference type="ChEBI" id="CHEBI:29105"/>
    </ligand>
</feature>
<feature type="binding site" evidence="5">
    <location>
        <position position="99"/>
    </location>
    <ligand>
        <name>Zn(2+)</name>
        <dbReference type="ChEBI" id="CHEBI:29105"/>
    </ligand>
</feature>
<feature type="binding site" evidence="5">
    <location>
        <position position="118"/>
    </location>
    <ligand>
        <name>Zn(2+)</name>
        <dbReference type="ChEBI" id="CHEBI:29105"/>
    </ligand>
</feature>
<feature type="binding site" evidence="5">
    <location>
        <position position="124"/>
    </location>
    <ligand>
        <name>Zn(2+)</name>
        <dbReference type="ChEBI" id="CHEBI:29105"/>
    </ligand>
</feature>
<feature type="modified residue" description="N-acetylalanine" evidence="3">
    <location>
        <position position="2"/>
    </location>
</feature>
<reference key="1">
    <citation type="journal article" date="2005" name="Proc. Natl. Acad. Sci. U.S.A.">
        <title>Positive selection of primate TRIM5alpha identifies a critical species-specific retroviral restriction domain.</title>
        <authorList>
            <person name="Sawyer S.L."/>
            <person name="Wu L.I."/>
            <person name="Emerman M."/>
            <person name="Malik H.S."/>
        </authorList>
    </citation>
    <scope>NUCLEOTIDE SEQUENCE [GENOMIC DNA]</scope>
</reference>
<reference key="2">
    <citation type="journal article" date="2012" name="Front. Microbiol.">
        <title>TRIM5alpha and species tropism of HIV/SIV.</title>
        <authorList>
            <person name="Nakayama E.E."/>
            <person name="Shioda T."/>
        </authorList>
    </citation>
    <scope>REVIEW</scope>
    <scope>FUNCTION</scope>
</reference>
<name>TRIM5_SAISC</name>
<accession>Q5D7I0</accession>
<proteinExistence type="inferred from homology"/>